<protein>
    <recommendedName>
        <fullName evidence="1">Cathelicidin antimicrobial peptide</fullName>
    </recommendedName>
    <component>
        <recommendedName>
            <fullName evidence="1">Antibacterial peptide FALL-39</fullName>
        </recommendedName>
        <alternativeName>
            <fullName evidence="1">FALL-39 peptide antibiotic</fullName>
        </alternativeName>
    </component>
    <component>
        <recommendedName>
            <fullName evidence="1">Antibacterial peptide LL-37</fullName>
        </recommendedName>
    </component>
</protein>
<organism>
    <name type="scientific">Ateles fusciceps robustus</name>
    <name type="common">Colombian black-faced spider monkey</name>
    <dbReference type="NCBI Taxonomy" id="183327"/>
    <lineage>
        <taxon>Eukaryota</taxon>
        <taxon>Metazoa</taxon>
        <taxon>Chordata</taxon>
        <taxon>Craniata</taxon>
        <taxon>Vertebrata</taxon>
        <taxon>Euteleostomi</taxon>
        <taxon>Mammalia</taxon>
        <taxon>Eutheria</taxon>
        <taxon>Euarchontoglires</taxon>
        <taxon>Primates</taxon>
        <taxon>Haplorrhini</taxon>
        <taxon>Platyrrhini</taxon>
        <taxon>Atelidae</taxon>
        <taxon>Atelinae</taxon>
        <taxon>Ateles</taxon>
    </lineage>
</organism>
<comment type="function">
    <text evidence="1">Antimicrobial protein that is an integral component of the innate immune system (By similarity). Binds to bacterial lipopolysaccharides (LPS) (By similarity). Acts via neutrophil N-formyl peptide receptors to enhance the release of CXCL2 (By similarity). Postsecretory processing generates multiple cathelicidin antimicrobial peptides with various lengths which act as a topical antimicrobial defense in sweat on skin (By similarity). The unprocessed precursor form, cathelicidin antimicrobial peptide, inhibits the growth of Gram-negative E.coli and E.aerogenes with efficiencies comparable to that of the mature peptide LL-37 (in vitro) (By similarity).</text>
</comment>
<comment type="function">
    <molecule>Antibacterial peptide LL-37</molecule>
    <text evidence="1">Antimicrobial peptide that is an integral component of the innate immune system (By similarity). Binds to bacterial lipopolysaccharides (LPS) (By similarity). Causes membrane permeabilization by forming transmembrane pores (in vitro) (By similarity). Causes lysis of E.coli (By similarity). Exhibits antimicrobial activity against Gram-negative bacteria such as P.aeruginosa, S.typhimurium, E.aerogenes, E.coli and P.syringae, Gram-positive bacteria such as L.monocytogenes, S.epidermidis, S.pyogenes and S.aureus, as well as vancomycin-resistant enterococci (in vitro) (By similarity). Exhibits antimicrobial activity against methicillin-resistant S.aureus, P.mirabilis, and C.albicans in low-salt media, but not in media containing 100 mM NaCl (in vitro) (By similarity). Forms chiral supramolecular assemblies with quinolone signal (PQS) molecules of P.aeruginosa, which may lead to interference of bacterial quorum signaling and perturbance of bacterial biofilm formation (By similarity). May form supramolecular fiber-like assemblies on bacterial membranes (By similarity). Induces cytokine and chemokine producation as well as TNF/TNFA and CSF2/GMCSF production in normal human keratinocytes (By similarity). Exhibits hemolytic activity against red blood cells (By similarity).</text>
</comment>
<comment type="function">
    <molecule>Antibacterial peptide FALL-39</molecule>
    <text evidence="1">Exhibits antimicrobial activity against E.coli and B.megaterium (in vitro).</text>
</comment>
<comment type="subunit">
    <molecule>Antibacterial peptide LL-37</molecule>
    <text evidence="1">Monomer, homodimer or homotrimer (in vitro) (By similarity). Oligomerizes as tetra- or hexamer in solution (in vitro) (By similarity).</text>
</comment>
<comment type="subcellular location">
    <subcellularLocation>
        <location evidence="2">Secreted</location>
    </subcellularLocation>
    <subcellularLocation>
        <location evidence="2">Vesicle</location>
    </subcellularLocation>
    <text evidence="2">Stored as pro-peptide in granules and phagolysosomes of neutrophils (By similarity). Secreted in sweat onto skin (By similarity).</text>
</comment>
<comment type="domain">
    <text evidence="2">The cathelin-like domain (CLD), which is the propeptide part, does not seem to exhibit auto-inhibitory function, as it does not inhibit the antibacterial activity of antibacterial peptide LL-37.</text>
</comment>
<comment type="domain">
    <molecule>Antibacterial peptide LL-37</molecule>
    <text evidence="2">Undergoes conformational change in the presence of lipid A, transitioning from a random coil to an alpha-helical structure.</text>
</comment>
<comment type="domain">
    <molecule>Antibacterial peptide LL-37</molecule>
    <text evidence="2">Residues 17-29 of LL-37 represent the active core of the antimicrobial peptide. Forms ribbon-like fibrils and exhibits antibacterial activity against Gram-positive M.luteus (By similarity). Also exhibits antibacterial activity against Gram-negative E.coli and P.fluorescens (By similarity).</text>
</comment>
<comment type="PTM">
    <text evidence="1">Proteolytically cleaved by proteinase PRTN3 into antibacterial peptide LL-37 (By similarity). Proteolytically cleaved by cathepsin CTSG and neutrophil elastase ELANE (By similarity).</text>
</comment>
<comment type="PTM">
    <molecule>Antibacterial peptide LL-37</molecule>
    <text evidence="1">Resistant to proteolytic degradation in solution, and when bound to both zwitterionic (mimicking mammalian membranes) and negatively charged membranes (mimicking bacterial membranes).</text>
</comment>
<comment type="PTM">
    <text evidence="1">After secretion onto the skin surface, the CAMP gene product is processed by a serine protease-dependent mechanism into multiple novel antimicrobial peptides distinct from and shorter than cathelicidin LL-37 (By similarity). These peptides show enhanced antimicrobial action, acquiring the ability to kill skin pathogens such as S.aureus, E.coli and C.albicans. These peptides have lost the ability to stimulate CXCL8/IL8 release from keratinocytes (By similarity). The peptides act synergistically, killing bacteria at lower concentrations when present together, and maintain activity at increased salt condition (By similarity).</text>
</comment>
<comment type="similarity">
    <text evidence="4">Belongs to the cathelicidin family.</text>
</comment>
<accession>Q1KLY8</accession>
<dbReference type="EMBL" id="DQ471354">
    <property type="protein sequence ID" value="ABE96618.1"/>
    <property type="molecule type" value="Genomic_DNA"/>
</dbReference>
<dbReference type="SMR" id="Q1KLY8"/>
<dbReference type="GO" id="GO:0005615">
    <property type="term" value="C:extracellular space"/>
    <property type="evidence" value="ECO:0007669"/>
    <property type="project" value="TreeGrafter"/>
</dbReference>
<dbReference type="GO" id="GO:0031982">
    <property type="term" value="C:vesicle"/>
    <property type="evidence" value="ECO:0007669"/>
    <property type="project" value="UniProtKB-SubCell"/>
</dbReference>
<dbReference type="GO" id="GO:0001530">
    <property type="term" value="F:lipopolysaccharide binding"/>
    <property type="evidence" value="ECO:0007669"/>
    <property type="project" value="TreeGrafter"/>
</dbReference>
<dbReference type="GO" id="GO:0061844">
    <property type="term" value="P:antimicrobial humoral immune response mediated by antimicrobial peptide"/>
    <property type="evidence" value="ECO:0007669"/>
    <property type="project" value="TreeGrafter"/>
</dbReference>
<dbReference type="GO" id="GO:0050829">
    <property type="term" value="P:defense response to Gram-negative bacterium"/>
    <property type="evidence" value="ECO:0007669"/>
    <property type="project" value="TreeGrafter"/>
</dbReference>
<dbReference type="GO" id="GO:0050830">
    <property type="term" value="P:defense response to Gram-positive bacterium"/>
    <property type="evidence" value="ECO:0007669"/>
    <property type="project" value="TreeGrafter"/>
</dbReference>
<dbReference type="GO" id="GO:0045087">
    <property type="term" value="P:innate immune response"/>
    <property type="evidence" value="ECO:0007669"/>
    <property type="project" value="UniProtKB-KW"/>
</dbReference>
<dbReference type="GO" id="GO:0042119">
    <property type="term" value="P:neutrophil activation"/>
    <property type="evidence" value="ECO:0000250"/>
    <property type="project" value="UniProtKB"/>
</dbReference>
<dbReference type="FunFam" id="3.10.450.10:FF:000003">
    <property type="entry name" value="Cathelicidin antimicrobial peptide"/>
    <property type="match status" value="1"/>
</dbReference>
<dbReference type="Gene3D" id="3.10.450.10">
    <property type="match status" value="1"/>
</dbReference>
<dbReference type="InterPro" id="IPR001894">
    <property type="entry name" value="Cathelicidin-like"/>
</dbReference>
<dbReference type="InterPro" id="IPR018216">
    <property type="entry name" value="Cathelicidin_CS"/>
</dbReference>
<dbReference type="InterPro" id="IPR022746">
    <property type="entry name" value="Cathlecidin_C"/>
</dbReference>
<dbReference type="InterPro" id="IPR046350">
    <property type="entry name" value="Cystatin_sf"/>
</dbReference>
<dbReference type="PANTHER" id="PTHR10206">
    <property type="entry name" value="CATHELICIDIN"/>
    <property type="match status" value="1"/>
</dbReference>
<dbReference type="PANTHER" id="PTHR10206:SF2">
    <property type="entry name" value="CATHELICIDIN ANTIMICROBIAL PEPTIDE"/>
    <property type="match status" value="1"/>
</dbReference>
<dbReference type="Pfam" id="PF12153">
    <property type="entry name" value="CAP18_C"/>
    <property type="match status" value="1"/>
</dbReference>
<dbReference type="Pfam" id="PF00666">
    <property type="entry name" value="Cathelicidins"/>
    <property type="match status" value="1"/>
</dbReference>
<dbReference type="SUPFAM" id="SSF54403">
    <property type="entry name" value="Cystatin/monellin"/>
    <property type="match status" value="1"/>
</dbReference>
<dbReference type="PROSITE" id="PS00946">
    <property type="entry name" value="CATHELICIDINS_1"/>
    <property type="match status" value="1"/>
</dbReference>
<dbReference type="PROSITE" id="PS00947">
    <property type="entry name" value="CATHELICIDINS_2"/>
    <property type="match status" value="1"/>
</dbReference>
<evidence type="ECO:0000250" key="1">
    <source>
        <dbReference type="UniProtKB" id="P49913"/>
    </source>
</evidence>
<evidence type="ECO:0000250" key="2">
    <source>
        <dbReference type="UniProtKB" id="P54229"/>
    </source>
</evidence>
<evidence type="ECO:0000255" key="3"/>
<evidence type="ECO:0000305" key="4"/>
<gene>
    <name evidence="1" type="primary">CAMP</name>
</gene>
<keyword id="KW-0044">Antibiotic</keyword>
<keyword id="KW-0929">Antimicrobial</keyword>
<keyword id="KW-0165">Cleavage on pair of basic residues</keyword>
<keyword id="KW-1015">Disulfide bond</keyword>
<keyword id="KW-0391">Immunity</keyword>
<keyword id="KW-0399">Innate immunity</keyword>
<keyword id="KW-0964">Secreted</keyword>
<keyword id="KW-0732">Signal</keyword>
<name>CAMP_ATEFR</name>
<proteinExistence type="inferred from homology"/>
<reference key="1">
    <citation type="journal article" date="2006" name="J. Biol. Chem.">
        <title>Evolution of the primate cathelicidin. Correlation between structural variations and antimicrobial activity.</title>
        <authorList>
            <person name="Zelezetsky I."/>
            <person name="Pontillo A."/>
            <person name="Puzzi L."/>
            <person name="Antcheva N."/>
            <person name="Segat L."/>
            <person name="Pacor S."/>
            <person name="Crovella S."/>
            <person name="Tossi A."/>
        </authorList>
    </citation>
    <scope>NUCLEOTIDE SEQUENCE [GENOMIC DNA]</scope>
</reference>
<feature type="signal peptide" evidence="3">
    <location>
        <begin position="1"/>
        <end position="30"/>
    </location>
</feature>
<feature type="propeptide" id="PRO_0000251737" description="Cathelin-like domain (CLD)" evidence="1">
    <location>
        <begin position="31"/>
        <end position="131"/>
    </location>
</feature>
<feature type="peptide" id="PRO_0000251738" description="Antibacterial peptide FALL-39" evidence="1">
    <location>
        <begin position="132"/>
        <end position="170"/>
    </location>
</feature>
<feature type="peptide" id="PRO_0000251739" description="Antibacterial peptide LL-37" evidence="1">
    <location>
        <begin position="134"/>
        <end position="170"/>
    </location>
</feature>
<feature type="region of interest" description="Active core" evidence="1">
    <location>
        <begin position="150"/>
        <end position="162"/>
    </location>
</feature>
<feature type="disulfide bond" evidence="1">
    <location>
        <begin position="86"/>
        <end position="97"/>
    </location>
</feature>
<feature type="disulfide bond" evidence="1">
    <location>
        <begin position="108"/>
        <end position="125"/>
    </location>
</feature>
<sequence length="170" mass="19002">MKTQRDGPSLGRWSLVLLLLGLTMPLAVIARVLSYQEAVLRAVDVLNQRSSDANLYRLLNLDPRPTMDGDPDTPKPVSFTVKETVCPRTIQRSPEECDFKEDGLVKWCVGTVTLNQAKDSFDISCDKDKRKVAQLGDVLQKAGEKIVRGLKNIGQRIKDFFGKLTPRTES</sequence>